<reference key="1">
    <citation type="journal article" date="2004" name="Nat. Genet.">
        <title>Complete sequencing and characterization of 21,243 full-length human cDNAs.</title>
        <authorList>
            <person name="Ota T."/>
            <person name="Suzuki Y."/>
            <person name="Nishikawa T."/>
            <person name="Otsuki T."/>
            <person name="Sugiyama T."/>
            <person name="Irie R."/>
            <person name="Wakamatsu A."/>
            <person name="Hayashi K."/>
            <person name="Sato H."/>
            <person name="Nagai K."/>
            <person name="Kimura K."/>
            <person name="Makita H."/>
            <person name="Sekine M."/>
            <person name="Obayashi M."/>
            <person name="Nishi T."/>
            <person name="Shibahara T."/>
            <person name="Tanaka T."/>
            <person name="Ishii S."/>
            <person name="Yamamoto J."/>
            <person name="Saito K."/>
            <person name="Kawai Y."/>
            <person name="Isono Y."/>
            <person name="Nakamura Y."/>
            <person name="Nagahari K."/>
            <person name="Murakami K."/>
            <person name="Yasuda T."/>
            <person name="Iwayanagi T."/>
            <person name="Wagatsuma M."/>
            <person name="Shiratori A."/>
            <person name="Sudo H."/>
            <person name="Hosoiri T."/>
            <person name="Kaku Y."/>
            <person name="Kodaira H."/>
            <person name="Kondo H."/>
            <person name="Sugawara M."/>
            <person name="Takahashi M."/>
            <person name="Kanda K."/>
            <person name="Yokoi T."/>
            <person name="Furuya T."/>
            <person name="Kikkawa E."/>
            <person name="Omura Y."/>
            <person name="Abe K."/>
            <person name="Kamihara K."/>
            <person name="Katsuta N."/>
            <person name="Sato K."/>
            <person name="Tanikawa M."/>
            <person name="Yamazaki M."/>
            <person name="Ninomiya K."/>
            <person name="Ishibashi T."/>
            <person name="Yamashita H."/>
            <person name="Murakawa K."/>
            <person name="Fujimori K."/>
            <person name="Tanai H."/>
            <person name="Kimata M."/>
            <person name="Watanabe M."/>
            <person name="Hiraoka S."/>
            <person name="Chiba Y."/>
            <person name="Ishida S."/>
            <person name="Ono Y."/>
            <person name="Takiguchi S."/>
            <person name="Watanabe S."/>
            <person name="Yosida M."/>
            <person name="Hotuta T."/>
            <person name="Kusano J."/>
            <person name="Kanehori K."/>
            <person name="Takahashi-Fujii A."/>
            <person name="Hara H."/>
            <person name="Tanase T.-O."/>
            <person name="Nomura Y."/>
            <person name="Togiya S."/>
            <person name="Komai F."/>
            <person name="Hara R."/>
            <person name="Takeuchi K."/>
            <person name="Arita M."/>
            <person name="Imose N."/>
            <person name="Musashino K."/>
            <person name="Yuuki H."/>
            <person name="Oshima A."/>
            <person name="Sasaki N."/>
            <person name="Aotsuka S."/>
            <person name="Yoshikawa Y."/>
            <person name="Matsunawa H."/>
            <person name="Ichihara T."/>
            <person name="Shiohata N."/>
            <person name="Sano S."/>
            <person name="Moriya S."/>
            <person name="Momiyama H."/>
            <person name="Satoh N."/>
            <person name="Takami S."/>
            <person name="Terashima Y."/>
            <person name="Suzuki O."/>
            <person name="Nakagawa S."/>
            <person name="Senoh A."/>
            <person name="Mizoguchi H."/>
            <person name="Goto Y."/>
            <person name="Shimizu F."/>
            <person name="Wakebe H."/>
            <person name="Hishigaki H."/>
            <person name="Watanabe T."/>
            <person name="Sugiyama A."/>
            <person name="Takemoto M."/>
            <person name="Kawakami B."/>
            <person name="Yamazaki M."/>
            <person name="Watanabe K."/>
            <person name="Kumagai A."/>
            <person name="Itakura S."/>
            <person name="Fukuzumi Y."/>
            <person name="Fujimori Y."/>
            <person name="Komiyama M."/>
            <person name="Tashiro H."/>
            <person name="Tanigami A."/>
            <person name="Fujiwara T."/>
            <person name="Ono T."/>
            <person name="Yamada K."/>
            <person name="Fujii Y."/>
            <person name="Ozaki K."/>
            <person name="Hirao M."/>
            <person name="Ohmori Y."/>
            <person name="Kawabata A."/>
            <person name="Hikiji T."/>
            <person name="Kobatake N."/>
            <person name="Inagaki H."/>
            <person name="Ikema Y."/>
            <person name="Okamoto S."/>
            <person name="Okitani R."/>
            <person name="Kawakami T."/>
            <person name="Noguchi S."/>
            <person name="Itoh T."/>
            <person name="Shigeta K."/>
            <person name="Senba T."/>
            <person name="Matsumura K."/>
            <person name="Nakajima Y."/>
            <person name="Mizuno T."/>
            <person name="Morinaga M."/>
            <person name="Sasaki M."/>
            <person name="Togashi T."/>
            <person name="Oyama M."/>
            <person name="Hata H."/>
            <person name="Watanabe M."/>
            <person name="Komatsu T."/>
            <person name="Mizushima-Sugano J."/>
            <person name="Satoh T."/>
            <person name="Shirai Y."/>
            <person name="Takahashi Y."/>
            <person name="Nakagawa K."/>
            <person name="Okumura K."/>
            <person name="Nagase T."/>
            <person name="Nomura N."/>
            <person name="Kikuchi H."/>
            <person name="Masuho Y."/>
            <person name="Yamashita R."/>
            <person name="Nakai K."/>
            <person name="Yada T."/>
            <person name="Nakamura Y."/>
            <person name="Ohara O."/>
            <person name="Isogai T."/>
            <person name="Sugano S."/>
        </authorList>
    </citation>
    <scope>NUCLEOTIDE SEQUENCE [LARGE SCALE MRNA]</scope>
    <source>
        <tissue>Teratocarcinoma</tissue>
    </source>
</reference>
<organism>
    <name type="scientific">Homo sapiens</name>
    <name type="common">Human</name>
    <dbReference type="NCBI Taxonomy" id="9606"/>
    <lineage>
        <taxon>Eukaryota</taxon>
        <taxon>Metazoa</taxon>
        <taxon>Chordata</taxon>
        <taxon>Craniata</taxon>
        <taxon>Vertebrata</taxon>
        <taxon>Euteleostomi</taxon>
        <taxon>Mammalia</taxon>
        <taxon>Eutheria</taxon>
        <taxon>Euarchontoglires</taxon>
        <taxon>Primates</taxon>
        <taxon>Haplorrhini</taxon>
        <taxon>Catarrhini</taxon>
        <taxon>Hominidae</taxon>
        <taxon>Homo</taxon>
    </lineage>
</organism>
<proteinExistence type="uncertain"/>
<evidence type="ECO:0000256" key="1">
    <source>
        <dbReference type="SAM" id="MobiDB-lite"/>
    </source>
</evidence>
<evidence type="ECO:0000305" key="2"/>
<protein>
    <recommendedName>
        <fullName>Putative uncharacterized protein FLJ13197</fullName>
    </recommendedName>
</protein>
<feature type="chain" id="PRO_0000336057" description="Putative uncharacterized protein FLJ13197">
    <location>
        <begin position="1"/>
        <end position="135"/>
    </location>
</feature>
<feature type="region of interest" description="Disordered" evidence="1">
    <location>
        <begin position="1"/>
        <end position="70"/>
    </location>
</feature>
<dbReference type="EMBL" id="AK023259">
    <property type="protein sequence ID" value="BAB14493.1"/>
    <property type="molecule type" value="mRNA"/>
</dbReference>
<dbReference type="BioMuta" id="-"/>
<dbReference type="MassIVE" id="Q9H8V8"/>
<dbReference type="neXtProt" id="NX_Q9H8V8"/>
<dbReference type="InParanoid" id="Q9H8V8"/>
<dbReference type="PAN-GO" id="Q9H8V8">
    <property type="GO annotations" value="0 GO annotations based on evolutionary models"/>
</dbReference>
<dbReference type="Pharos" id="Q9H8V8">
    <property type="development level" value="Tdark"/>
</dbReference>
<dbReference type="Proteomes" id="UP000005640">
    <property type="component" value="Unplaced"/>
</dbReference>
<dbReference type="RNAct" id="Q9H8V8">
    <property type="molecule type" value="protein"/>
</dbReference>
<comment type="caution">
    <text evidence="2">Product of a dubious CDS prediction.</text>
</comment>
<accession>Q9H8V8</accession>
<sequence length="135" mass="14815">MKPDWPRRGAAGTRVRSRGEGDGTYFARRGAGRRRREIKAPIRAAWSPPSAAMSGLQSGRRWRPQGTGTGARAAGALAALRLGPRLRAAPLLAPLWLLAPTPDSHMTPAPLALRASRGWRENNLSDYQYSWMQKC</sequence>
<name>YD018_HUMAN</name>
<keyword id="KW-1185">Reference proteome</keyword>